<protein>
    <recommendedName>
        <fullName evidence="1">L-lactate dehydrogenase</fullName>
        <shortName evidence="1">L-LDH</shortName>
        <ecNumber evidence="1">1.1.1.27</ecNumber>
    </recommendedName>
</protein>
<feature type="chain" id="PRO_1000190778" description="L-lactate dehydrogenase">
    <location>
        <begin position="1"/>
        <end position="327"/>
    </location>
</feature>
<feature type="active site" description="Proton acceptor" evidence="1">
    <location>
        <position position="179"/>
    </location>
</feature>
<feature type="binding site" evidence="1">
    <location>
        <position position="18"/>
    </location>
    <ligand>
        <name>NAD(+)</name>
        <dbReference type="ChEBI" id="CHEBI:57540"/>
    </ligand>
</feature>
<feature type="binding site" evidence="1">
    <location>
        <position position="39"/>
    </location>
    <ligand>
        <name>NAD(+)</name>
        <dbReference type="ChEBI" id="CHEBI:57540"/>
    </ligand>
</feature>
<feature type="binding site" evidence="1">
    <location>
        <position position="44"/>
    </location>
    <ligand>
        <name>NAD(+)</name>
        <dbReference type="ChEBI" id="CHEBI:57540"/>
    </ligand>
</feature>
<feature type="binding site" evidence="1">
    <location>
        <position position="69"/>
    </location>
    <ligand>
        <name>NAD(+)</name>
        <dbReference type="ChEBI" id="CHEBI:57540"/>
    </ligand>
</feature>
<feature type="binding site" evidence="1">
    <location>
        <begin position="83"/>
        <end position="84"/>
    </location>
    <ligand>
        <name>NAD(+)</name>
        <dbReference type="ChEBI" id="CHEBI:57540"/>
    </ligand>
</feature>
<feature type="binding site" evidence="1">
    <location>
        <position position="86"/>
    </location>
    <ligand>
        <name>substrate</name>
    </ligand>
</feature>
<feature type="binding site" evidence="1">
    <location>
        <position position="92"/>
    </location>
    <ligand>
        <name>substrate</name>
    </ligand>
</feature>
<feature type="binding site" evidence="1">
    <location>
        <begin position="122"/>
        <end position="124"/>
    </location>
    <ligand>
        <name>NAD(+)</name>
        <dbReference type="ChEBI" id="CHEBI:57540"/>
    </ligand>
</feature>
<feature type="binding site" evidence="1">
    <location>
        <begin position="124"/>
        <end position="127"/>
    </location>
    <ligand>
        <name>substrate</name>
    </ligand>
</feature>
<feature type="binding site" evidence="1">
    <location>
        <position position="147"/>
    </location>
    <ligand>
        <name>NAD(+)</name>
        <dbReference type="ChEBI" id="CHEBI:57540"/>
    </ligand>
</feature>
<feature type="binding site" evidence="1">
    <location>
        <begin position="152"/>
        <end position="155"/>
    </location>
    <ligand>
        <name>substrate</name>
    </ligand>
</feature>
<feature type="binding site" evidence="1">
    <location>
        <position position="157"/>
    </location>
    <ligand>
        <name>beta-D-fructose 1,6-bisphosphate</name>
        <dbReference type="ChEBI" id="CHEBI:32966"/>
        <note>allosteric activator</note>
    </ligand>
</feature>
<feature type="binding site" evidence="1">
    <location>
        <position position="172"/>
    </location>
    <ligand>
        <name>beta-D-fructose 1,6-bisphosphate</name>
        <dbReference type="ChEBI" id="CHEBI:32966"/>
        <note>allosteric activator</note>
    </ligand>
</feature>
<feature type="binding site" evidence="1">
    <location>
        <position position="233"/>
    </location>
    <ligand>
        <name>substrate</name>
    </ligand>
</feature>
<feature type="modified residue" description="Phosphotyrosine" evidence="1">
    <location>
        <position position="224"/>
    </location>
</feature>
<gene>
    <name evidence="1" type="primary">ldh</name>
    <name type="ordered locus">SEQ_1169</name>
</gene>
<organism>
    <name type="scientific">Streptococcus equi subsp. equi (strain 4047)</name>
    <dbReference type="NCBI Taxonomy" id="553482"/>
    <lineage>
        <taxon>Bacteria</taxon>
        <taxon>Bacillati</taxon>
        <taxon>Bacillota</taxon>
        <taxon>Bacilli</taxon>
        <taxon>Lactobacillales</taxon>
        <taxon>Streptococcaceae</taxon>
        <taxon>Streptococcus</taxon>
    </lineage>
</organism>
<reference key="1">
    <citation type="journal article" date="2009" name="PLoS Pathog.">
        <title>Genomic evidence for the evolution of Streptococcus equi: host restriction, increased virulence, and genetic exchange with human pathogens.</title>
        <authorList>
            <person name="Holden M.T.G."/>
            <person name="Heather Z."/>
            <person name="Paillot R."/>
            <person name="Steward K.F."/>
            <person name="Webb K."/>
            <person name="Ainslie F."/>
            <person name="Jourdan T."/>
            <person name="Bason N.C."/>
            <person name="Holroyd N.E."/>
            <person name="Mungall K."/>
            <person name="Quail M.A."/>
            <person name="Sanders M."/>
            <person name="Simmonds M."/>
            <person name="Willey D."/>
            <person name="Brooks K."/>
            <person name="Aanensen D.M."/>
            <person name="Spratt B.G."/>
            <person name="Jolley K.A."/>
            <person name="Maiden M.C.J."/>
            <person name="Kehoe M."/>
            <person name="Chanter N."/>
            <person name="Bentley S.D."/>
            <person name="Robinson C."/>
            <person name="Maskell D.J."/>
            <person name="Parkhill J."/>
            <person name="Waller A.S."/>
        </authorList>
    </citation>
    <scope>NUCLEOTIDE SEQUENCE [LARGE SCALE GENOMIC DNA]</scope>
    <source>
        <strain>4047</strain>
    </source>
</reference>
<name>LDH_STRE4</name>
<sequence length="327" mass="35302">MTATKQHKKVILVGDGAVGSSYAFALVTQNIAQELGIIDIFKEKTQGDAEDLSHALAFTSPKKIYAADYADCHDADLVVLTAGAPQKPGETRLDLVEKNLRINKEVVTQIVASGFKGIFLVAANPVDILTYSTWKFSGFPKERVIGSGTSLDSARFRQALAAKIGVDARSVHAYIMGEHGDSEFAVWSHANVAGVGLYDWLQANRDVDEQGLVDLFISVRDAAYSIINKKGATFYGIAVALARITKAILDDENAVLPLSVFQEGQYEGVEDCYIGQPAIVGAYGIVRPVNIPLNDAELQKMQASANQLKTIIDEAFSKEEFASAAKN</sequence>
<dbReference type="EC" id="1.1.1.27" evidence="1"/>
<dbReference type="EMBL" id="FM204883">
    <property type="protein sequence ID" value="CAW93865.1"/>
    <property type="molecule type" value="Genomic_DNA"/>
</dbReference>
<dbReference type="RefSeq" id="WP_012679559.1">
    <property type="nucleotide sequence ID" value="NC_012471.1"/>
</dbReference>
<dbReference type="SMR" id="C0M7H8"/>
<dbReference type="KEGG" id="seu:SEQ_1169"/>
<dbReference type="HOGENOM" id="CLU_045401_1_1_9"/>
<dbReference type="OrthoDB" id="9802969at2"/>
<dbReference type="UniPathway" id="UPA00554">
    <property type="reaction ID" value="UER00611"/>
</dbReference>
<dbReference type="Proteomes" id="UP000001365">
    <property type="component" value="Chromosome"/>
</dbReference>
<dbReference type="GO" id="GO:0005737">
    <property type="term" value="C:cytoplasm"/>
    <property type="evidence" value="ECO:0007669"/>
    <property type="project" value="UniProtKB-SubCell"/>
</dbReference>
<dbReference type="GO" id="GO:0004459">
    <property type="term" value="F:L-lactate dehydrogenase activity"/>
    <property type="evidence" value="ECO:0007669"/>
    <property type="project" value="UniProtKB-UniRule"/>
</dbReference>
<dbReference type="GO" id="GO:0006096">
    <property type="term" value="P:glycolytic process"/>
    <property type="evidence" value="ECO:0007669"/>
    <property type="project" value="UniProtKB-UniRule"/>
</dbReference>
<dbReference type="GO" id="GO:0006089">
    <property type="term" value="P:lactate metabolic process"/>
    <property type="evidence" value="ECO:0007669"/>
    <property type="project" value="TreeGrafter"/>
</dbReference>
<dbReference type="CDD" id="cd05291">
    <property type="entry name" value="HicDH_like"/>
    <property type="match status" value="1"/>
</dbReference>
<dbReference type="FunFam" id="3.40.50.720:FF:000018">
    <property type="entry name" value="Malate dehydrogenase"/>
    <property type="match status" value="1"/>
</dbReference>
<dbReference type="Gene3D" id="3.90.110.10">
    <property type="entry name" value="Lactate dehydrogenase/glycoside hydrolase, family 4, C-terminal"/>
    <property type="match status" value="1"/>
</dbReference>
<dbReference type="Gene3D" id="3.40.50.720">
    <property type="entry name" value="NAD(P)-binding Rossmann-like Domain"/>
    <property type="match status" value="1"/>
</dbReference>
<dbReference type="HAMAP" id="MF_00488">
    <property type="entry name" value="Lactate_dehydrog"/>
    <property type="match status" value="1"/>
</dbReference>
<dbReference type="InterPro" id="IPR001557">
    <property type="entry name" value="L-lactate/malate_DH"/>
</dbReference>
<dbReference type="InterPro" id="IPR011304">
    <property type="entry name" value="L-lactate_DH"/>
</dbReference>
<dbReference type="InterPro" id="IPR018177">
    <property type="entry name" value="L-lactate_DH_AS"/>
</dbReference>
<dbReference type="InterPro" id="IPR022383">
    <property type="entry name" value="Lactate/malate_DH_C"/>
</dbReference>
<dbReference type="InterPro" id="IPR001236">
    <property type="entry name" value="Lactate/malate_DH_N"/>
</dbReference>
<dbReference type="InterPro" id="IPR015955">
    <property type="entry name" value="Lactate_DH/Glyco_Ohase_4_C"/>
</dbReference>
<dbReference type="InterPro" id="IPR036291">
    <property type="entry name" value="NAD(P)-bd_dom_sf"/>
</dbReference>
<dbReference type="NCBIfam" id="TIGR01771">
    <property type="entry name" value="L-LDH-NAD"/>
    <property type="match status" value="1"/>
</dbReference>
<dbReference type="NCBIfam" id="NF000824">
    <property type="entry name" value="PRK00066.1"/>
    <property type="match status" value="1"/>
</dbReference>
<dbReference type="PANTHER" id="PTHR43128">
    <property type="entry name" value="L-2-HYDROXYCARBOXYLATE DEHYDROGENASE (NAD(P)(+))"/>
    <property type="match status" value="1"/>
</dbReference>
<dbReference type="PANTHER" id="PTHR43128:SF16">
    <property type="entry name" value="L-LACTATE DEHYDROGENASE"/>
    <property type="match status" value="1"/>
</dbReference>
<dbReference type="Pfam" id="PF02866">
    <property type="entry name" value="Ldh_1_C"/>
    <property type="match status" value="1"/>
</dbReference>
<dbReference type="Pfam" id="PF00056">
    <property type="entry name" value="Ldh_1_N"/>
    <property type="match status" value="1"/>
</dbReference>
<dbReference type="PIRSF" id="PIRSF000102">
    <property type="entry name" value="Lac_mal_DH"/>
    <property type="match status" value="1"/>
</dbReference>
<dbReference type="PRINTS" id="PR00086">
    <property type="entry name" value="LLDHDRGNASE"/>
</dbReference>
<dbReference type="SUPFAM" id="SSF56327">
    <property type="entry name" value="LDH C-terminal domain-like"/>
    <property type="match status" value="1"/>
</dbReference>
<dbReference type="SUPFAM" id="SSF51735">
    <property type="entry name" value="NAD(P)-binding Rossmann-fold domains"/>
    <property type="match status" value="1"/>
</dbReference>
<dbReference type="PROSITE" id="PS00064">
    <property type="entry name" value="L_LDH"/>
    <property type="match status" value="1"/>
</dbReference>
<accession>C0M7H8</accession>
<evidence type="ECO:0000255" key="1">
    <source>
        <dbReference type="HAMAP-Rule" id="MF_00488"/>
    </source>
</evidence>
<keyword id="KW-0021">Allosteric enzyme</keyword>
<keyword id="KW-0963">Cytoplasm</keyword>
<keyword id="KW-0520">NAD</keyword>
<keyword id="KW-0560">Oxidoreductase</keyword>
<keyword id="KW-0597">Phosphoprotein</keyword>
<comment type="function">
    <text evidence="1">Catalyzes the conversion of lactate to pyruvate.</text>
</comment>
<comment type="catalytic activity">
    <reaction evidence="1">
        <text>(S)-lactate + NAD(+) = pyruvate + NADH + H(+)</text>
        <dbReference type="Rhea" id="RHEA:23444"/>
        <dbReference type="ChEBI" id="CHEBI:15361"/>
        <dbReference type="ChEBI" id="CHEBI:15378"/>
        <dbReference type="ChEBI" id="CHEBI:16651"/>
        <dbReference type="ChEBI" id="CHEBI:57540"/>
        <dbReference type="ChEBI" id="CHEBI:57945"/>
        <dbReference type="EC" id="1.1.1.27"/>
    </reaction>
</comment>
<comment type="activity regulation">
    <text evidence="1">Allosterically activated by fructose 1,6-bisphosphate (FBP).</text>
</comment>
<comment type="pathway">
    <text evidence="1">Fermentation; pyruvate fermentation to lactate; (S)-lactate from pyruvate: step 1/1.</text>
</comment>
<comment type="subunit">
    <text evidence="1">Homotetramer.</text>
</comment>
<comment type="subcellular location">
    <subcellularLocation>
        <location evidence="1">Cytoplasm</location>
    </subcellularLocation>
</comment>
<comment type="similarity">
    <text evidence="1">Belongs to the LDH/MDH superfamily. LDH family.</text>
</comment>
<proteinExistence type="inferred from homology"/>